<feature type="chain" id="PRO_0000222873" description="RNA silencing suppressor p19">
    <location>
        <begin position="1"/>
        <end position="173"/>
    </location>
</feature>
<feature type="region of interest" description="Disordered" evidence="2">
    <location>
        <begin position="1"/>
        <end position="34"/>
    </location>
</feature>
<feature type="compositionally biased region" description="Basic and acidic residues" evidence="2">
    <location>
        <begin position="1"/>
        <end position="21"/>
    </location>
</feature>
<accession>P15184</accession>
<protein>
    <recommendedName>
        <fullName>RNA silencing suppressor p19</fullName>
    </recommendedName>
    <alternativeName>
        <fullName>19 kDa symptom severity modulator</fullName>
    </alternativeName>
</protein>
<gene>
    <name type="ORF">ORF4</name>
</gene>
<evidence type="ECO:0000250" key="1"/>
<evidence type="ECO:0000256" key="2">
    <source>
        <dbReference type="SAM" id="MobiDB-lite"/>
    </source>
</evidence>
<evidence type="ECO:0000305" key="3"/>
<sequence length="173" mass="19808">MERAIQRSDAREQANSERWDGRCGGTITPFKLPDESPSLLEWRLHNSEESEDKDHPLGFKESWSFGKVVFKRYLRYDGTETSLHRTLGSWERNSVNDAASRFLGVSQIGCTYSIRFRGSCLTLSGGSRTLQRLIEMAIRTKRTMLQLTPCEVEGNVSRRRPQGSEAFENKESE</sequence>
<dbReference type="EMBL" id="M25270">
    <property type="protein sequence ID" value="AAA42906.1"/>
    <property type="molecule type" value="Genomic_RNA"/>
</dbReference>
<dbReference type="PIR" id="JA0133">
    <property type="entry name" value="NKVGCU"/>
</dbReference>
<dbReference type="RefSeq" id="NP_040957.1">
    <property type="nucleotide sequence ID" value="NC_001469.1"/>
</dbReference>
<dbReference type="SMR" id="P15184"/>
<dbReference type="KEGG" id="vg:1493948"/>
<dbReference type="OrthoDB" id="10877at10239"/>
<dbReference type="Proteomes" id="UP000008565">
    <property type="component" value="Segment"/>
</dbReference>
<dbReference type="GO" id="GO:0044423">
    <property type="term" value="C:virion component"/>
    <property type="evidence" value="ECO:0007669"/>
    <property type="project" value="InterPro"/>
</dbReference>
<dbReference type="GO" id="GO:0003723">
    <property type="term" value="F:RNA binding"/>
    <property type="evidence" value="ECO:0007669"/>
    <property type="project" value="UniProtKB-KW"/>
</dbReference>
<dbReference type="GO" id="GO:0052170">
    <property type="term" value="P:symbiont-mediated suppression of host innate immune response"/>
    <property type="evidence" value="ECO:0007669"/>
    <property type="project" value="UniProtKB-KW"/>
</dbReference>
<dbReference type="Gene3D" id="3.30.390.180">
    <property type="entry name" value="RNA silencing suppressor P19"/>
    <property type="match status" value="1"/>
</dbReference>
<dbReference type="InterPro" id="IPR004905">
    <property type="entry name" value="Tombusvirus_p19"/>
</dbReference>
<dbReference type="InterPro" id="IPR036131">
    <property type="entry name" value="VP19_sf"/>
</dbReference>
<dbReference type="Pfam" id="PF03220">
    <property type="entry name" value="Tombus_P19"/>
    <property type="match status" value="1"/>
</dbReference>
<dbReference type="SUPFAM" id="SSF103145">
    <property type="entry name" value="Tombusvirus P19 core protein, VP19"/>
    <property type="match status" value="1"/>
</dbReference>
<proteinExistence type="inferred from homology"/>
<organismHost>
    <name type="scientific">Cucumis sativus</name>
    <name type="common">Cucumber</name>
    <dbReference type="NCBI Taxonomy" id="3659"/>
</organismHost>
<reference key="1">
    <citation type="journal article" date="1989" name="Virology">
        <title>Complete nucleotide sequence of the cucumber necrosis virus genome.</title>
        <authorList>
            <person name="Rochon D.M."/>
            <person name="Tremaine J.H."/>
        </authorList>
    </citation>
    <scope>NUCLEOTIDE SEQUENCE [GENOMIC RNA]</scope>
</reference>
<name>P19_CNV</name>
<organism>
    <name type="scientific">Cucumber necrosis virus</name>
    <name type="common">CNV</name>
    <dbReference type="NCBI Taxonomy" id="12143"/>
    <lineage>
        <taxon>Viruses</taxon>
        <taxon>Riboviria</taxon>
        <taxon>Orthornavirae</taxon>
        <taxon>Kitrinoviricota</taxon>
        <taxon>Tolucaviricetes</taxon>
        <taxon>Tolivirales</taxon>
        <taxon>Tombusviridae</taxon>
        <taxon>Procedovirinae</taxon>
        <taxon>Tombusvirus</taxon>
        <taxon>Tombusvirus cucumis</taxon>
    </lineage>
</organism>
<keyword id="KW-0945">Host-virus interaction</keyword>
<keyword id="KW-1090">Inhibition of host innate immune response by virus</keyword>
<keyword id="KW-0694">RNA-binding</keyword>
<keyword id="KW-0941">Suppressor of RNA silencing</keyword>
<keyword id="KW-0899">Viral immunoevasion</keyword>
<comment type="function">
    <text evidence="1">Viral suppressor of RNA silencing which binds specifically to silencing RNAs (siRNAs). Acts as a molecular caliper to specifically select siRNAs based on the length of the duplex region of the RNA (By similarity).</text>
</comment>
<comment type="subunit">
    <text evidence="1">Homodimer.</text>
</comment>
<comment type="similarity">
    <text evidence="3">Belongs to the tombusvirus protein p19 family.</text>
</comment>